<name>MASP2_RAT</name>
<organism>
    <name type="scientific">Rattus norvegicus</name>
    <name type="common">Rat</name>
    <dbReference type="NCBI Taxonomy" id="10116"/>
    <lineage>
        <taxon>Eukaryota</taxon>
        <taxon>Metazoa</taxon>
        <taxon>Chordata</taxon>
        <taxon>Craniata</taxon>
        <taxon>Vertebrata</taxon>
        <taxon>Euteleostomi</taxon>
        <taxon>Mammalia</taxon>
        <taxon>Eutheria</taxon>
        <taxon>Euarchontoglires</taxon>
        <taxon>Glires</taxon>
        <taxon>Rodentia</taxon>
        <taxon>Myomorpha</taxon>
        <taxon>Muroidea</taxon>
        <taxon>Muridae</taxon>
        <taxon>Murinae</taxon>
        <taxon>Rattus</taxon>
    </lineage>
</organism>
<proteinExistence type="evidence at protein level"/>
<dbReference type="EC" id="3.4.21.104"/>
<dbReference type="EMBL" id="Y19161">
    <property type="protein sequence ID" value="CAB65248.1"/>
    <property type="molecule type" value="mRNA"/>
</dbReference>
<dbReference type="EMBL" id="Y18565">
    <property type="protein sequence ID" value="CAB65382.1"/>
    <property type="molecule type" value="mRNA"/>
</dbReference>
<dbReference type="EMBL" id="Y18566">
    <property type="protein sequence ID" value="CAB65383.1"/>
    <property type="molecule type" value="mRNA"/>
</dbReference>
<dbReference type="EMBL" id="Y18567">
    <property type="protein sequence ID" value="CAB65384.1"/>
    <property type="molecule type" value="mRNA"/>
</dbReference>
<dbReference type="EMBL" id="Y18568">
    <property type="protein sequence ID" value="CAB65385.1"/>
    <property type="molecule type" value="mRNA"/>
</dbReference>
<dbReference type="EMBL" id="Y18569">
    <property type="protein sequence ID" value="CAB65386.1"/>
    <property type="molecule type" value="mRNA"/>
</dbReference>
<dbReference type="EMBL" id="Y18570">
    <property type="protein sequence ID" value="CAB65387.1"/>
    <property type="molecule type" value="mRNA"/>
</dbReference>
<dbReference type="EMBL" id="Y18571">
    <property type="protein sequence ID" value="CAB65388.1"/>
    <property type="molecule type" value="mRNA"/>
</dbReference>
<dbReference type="EMBL" id="Y18572">
    <property type="protein sequence ID" value="CAB65389.1"/>
    <property type="molecule type" value="mRNA"/>
</dbReference>
<dbReference type="EMBL" id="Y18573">
    <property type="protein sequence ID" value="CAB65390.1"/>
    <property type="molecule type" value="mRNA"/>
</dbReference>
<dbReference type="EMBL" id="Y18564">
    <property type="protein sequence ID" value="CAB70973.1"/>
    <property type="molecule type" value="mRNA"/>
</dbReference>
<dbReference type="EMBL" id="AJ277747">
    <property type="protein sequence ID" value="CAB90832.1"/>
    <property type="molecule type" value="mRNA"/>
</dbReference>
<dbReference type="EMBL" id="Y18285">
    <property type="protein sequence ID" value="CAB50738.1"/>
    <property type="molecule type" value="mRNA"/>
</dbReference>
<dbReference type="RefSeq" id="NP_742040.1">
    <property type="nucleotide sequence ID" value="NM_172043.1"/>
</dbReference>
<dbReference type="PDB" id="1NT0">
    <property type="method" value="X-ray"/>
    <property type="resolution" value="2.70 A"/>
    <property type="chains" value="A/G=20-299"/>
</dbReference>
<dbReference type="PDB" id="5CIS">
    <property type="method" value="X-ray"/>
    <property type="resolution" value="2.58 A"/>
    <property type="chains" value="A=21-298"/>
</dbReference>
<dbReference type="PDB" id="5CKM">
    <property type="method" value="X-ray"/>
    <property type="resolution" value="2.73 A"/>
    <property type="chains" value="A=21-297"/>
</dbReference>
<dbReference type="PDB" id="5CKN">
    <property type="method" value="X-ray"/>
    <property type="resolution" value="2.60 A"/>
    <property type="chains" value="A/D=20-297"/>
</dbReference>
<dbReference type="PDBsum" id="1NT0"/>
<dbReference type="PDBsum" id="5CIS"/>
<dbReference type="PDBsum" id="5CKM"/>
<dbReference type="PDBsum" id="5CKN"/>
<dbReference type="SMR" id="Q9JJS8"/>
<dbReference type="CORUM" id="Q9JJS8"/>
<dbReference type="FunCoup" id="Q9JJS8">
    <property type="interactions" value="26"/>
</dbReference>
<dbReference type="STRING" id="10116.ENSRNOP00000016317"/>
<dbReference type="BindingDB" id="Q9JJS8"/>
<dbReference type="MEROPS" id="S01.229"/>
<dbReference type="GlyCosmos" id="Q9JJS8">
    <property type="glycosylation" value="3 sites, No reported glycans"/>
</dbReference>
<dbReference type="GlyGen" id="Q9JJS8">
    <property type="glycosylation" value="3 sites"/>
</dbReference>
<dbReference type="iPTMnet" id="Q9JJS8"/>
<dbReference type="PhosphoSitePlus" id="Q9JJS8"/>
<dbReference type="PaxDb" id="10116-ENSRNOP00000016317"/>
<dbReference type="PeptideAtlas" id="Q9JJS8"/>
<dbReference type="ABCD" id="Q9JJS8">
    <property type="antibodies" value="10 sequenced antibodies"/>
</dbReference>
<dbReference type="GeneID" id="64459"/>
<dbReference type="KEGG" id="rno:64459"/>
<dbReference type="AGR" id="RGD:620214"/>
<dbReference type="CTD" id="10747"/>
<dbReference type="RGD" id="620214">
    <property type="gene designation" value="Masp2"/>
</dbReference>
<dbReference type="eggNOG" id="KOG3627">
    <property type="taxonomic scope" value="Eukaryota"/>
</dbReference>
<dbReference type="InParanoid" id="Q9JJS8"/>
<dbReference type="OrthoDB" id="9985152at2759"/>
<dbReference type="PhylomeDB" id="Q9JJS8"/>
<dbReference type="BRENDA" id="3.4.21.104">
    <property type="organism ID" value="5301"/>
</dbReference>
<dbReference type="Reactome" id="R-RNO-166662">
    <property type="pathway name" value="Lectin pathway of complement activation"/>
</dbReference>
<dbReference type="Reactome" id="R-RNO-166663">
    <property type="pathway name" value="Initial triggering of complement"/>
</dbReference>
<dbReference type="Reactome" id="R-RNO-2855086">
    <property type="pathway name" value="Ficolins bind to repetitive carbohydrate structures on the target cell surface"/>
</dbReference>
<dbReference type="SABIO-RK" id="Q9JJS8"/>
<dbReference type="EvolutionaryTrace" id="Q9JJS8"/>
<dbReference type="PRO" id="PR:Q9JJS8"/>
<dbReference type="Proteomes" id="UP000002494">
    <property type="component" value="Unplaced"/>
</dbReference>
<dbReference type="GO" id="GO:0005615">
    <property type="term" value="C:extracellular space"/>
    <property type="evidence" value="ECO:0000318"/>
    <property type="project" value="GO_Central"/>
</dbReference>
<dbReference type="GO" id="GO:0005509">
    <property type="term" value="F:calcium ion binding"/>
    <property type="evidence" value="ECO:0007669"/>
    <property type="project" value="InterPro"/>
</dbReference>
<dbReference type="GO" id="GO:0048306">
    <property type="term" value="F:calcium-dependent protein binding"/>
    <property type="evidence" value="ECO:0000266"/>
    <property type="project" value="RGD"/>
</dbReference>
<dbReference type="GO" id="GO:0001855">
    <property type="term" value="F:complement component C4b binding"/>
    <property type="evidence" value="ECO:0000266"/>
    <property type="project" value="RGD"/>
</dbReference>
<dbReference type="GO" id="GO:0008233">
    <property type="term" value="F:peptidase activity"/>
    <property type="evidence" value="ECO:0000314"/>
    <property type="project" value="RGD"/>
</dbReference>
<dbReference type="GO" id="GO:0004252">
    <property type="term" value="F:serine-type endopeptidase activity"/>
    <property type="evidence" value="ECO:0000314"/>
    <property type="project" value="UniProtKB"/>
</dbReference>
<dbReference type="GO" id="GO:0006956">
    <property type="term" value="P:complement activation"/>
    <property type="evidence" value="ECO:0000303"/>
    <property type="project" value="RGD"/>
</dbReference>
<dbReference type="GO" id="GO:0006958">
    <property type="term" value="P:complement activation, classical pathway"/>
    <property type="evidence" value="ECO:0007669"/>
    <property type="project" value="UniProtKB-KW"/>
</dbReference>
<dbReference type="GO" id="GO:0001867">
    <property type="term" value="P:complement activation, lectin pathway"/>
    <property type="evidence" value="ECO:0000266"/>
    <property type="project" value="RGD"/>
</dbReference>
<dbReference type="GO" id="GO:0006508">
    <property type="term" value="P:proteolysis"/>
    <property type="evidence" value="ECO:0007669"/>
    <property type="project" value="UniProtKB-KW"/>
</dbReference>
<dbReference type="CDD" id="cd00033">
    <property type="entry name" value="CCP"/>
    <property type="match status" value="2"/>
</dbReference>
<dbReference type="CDD" id="cd00041">
    <property type="entry name" value="CUB"/>
    <property type="match status" value="2"/>
</dbReference>
<dbReference type="CDD" id="cd00054">
    <property type="entry name" value="EGF_CA"/>
    <property type="match status" value="1"/>
</dbReference>
<dbReference type="CDD" id="cd00190">
    <property type="entry name" value="Tryp_SPc"/>
    <property type="match status" value="1"/>
</dbReference>
<dbReference type="FunFam" id="2.10.25.10:FF:000059">
    <property type="entry name" value="Mannan-binding lectin serine protease 1"/>
    <property type="match status" value="1"/>
</dbReference>
<dbReference type="FunFam" id="2.10.70.10:FF:000016">
    <property type="entry name" value="Mannan-binding lectin serine protease 1"/>
    <property type="match status" value="1"/>
</dbReference>
<dbReference type="FunFam" id="2.60.120.290:FF:000006">
    <property type="entry name" value="Mannan-binding lectin serine protease 1"/>
    <property type="match status" value="1"/>
</dbReference>
<dbReference type="FunFam" id="2.60.120.290:FF:000012">
    <property type="entry name" value="mannan-binding lectin serine protease 1 isoform X1"/>
    <property type="match status" value="1"/>
</dbReference>
<dbReference type="FunFam" id="2.10.70.10:FF:000084">
    <property type="entry name" value="Mannan-binding lectin serine protease 2"/>
    <property type="match status" value="1"/>
</dbReference>
<dbReference type="FunFam" id="2.40.10.10:FF:000089">
    <property type="entry name" value="Mannan-binding lectin serine protease 2"/>
    <property type="match status" value="1"/>
</dbReference>
<dbReference type="Gene3D" id="2.10.70.10">
    <property type="entry name" value="Complement Module, domain 1"/>
    <property type="match status" value="2"/>
</dbReference>
<dbReference type="Gene3D" id="2.10.25.10">
    <property type="entry name" value="Laminin"/>
    <property type="match status" value="1"/>
</dbReference>
<dbReference type="Gene3D" id="2.60.120.290">
    <property type="entry name" value="Spermadhesin, CUB domain"/>
    <property type="match status" value="2"/>
</dbReference>
<dbReference type="Gene3D" id="2.40.10.10">
    <property type="entry name" value="Trypsin-like serine proteases"/>
    <property type="match status" value="2"/>
</dbReference>
<dbReference type="InterPro" id="IPR000859">
    <property type="entry name" value="CUB_dom"/>
</dbReference>
<dbReference type="InterPro" id="IPR001881">
    <property type="entry name" value="EGF-like_Ca-bd_dom"/>
</dbReference>
<dbReference type="InterPro" id="IPR000742">
    <property type="entry name" value="EGF-like_dom"/>
</dbReference>
<dbReference type="InterPro" id="IPR018097">
    <property type="entry name" value="EGF_Ca-bd_CS"/>
</dbReference>
<dbReference type="InterPro" id="IPR049883">
    <property type="entry name" value="NOTCH1_EGF-like"/>
</dbReference>
<dbReference type="InterPro" id="IPR024175">
    <property type="entry name" value="Pept_S1A_C1r/C1S/mannan-bd"/>
</dbReference>
<dbReference type="InterPro" id="IPR009003">
    <property type="entry name" value="Peptidase_S1_PA"/>
</dbReference>
<dbReference type="InterPro" id="IPR043504">
    <property type="entry name" value="Peptidase_S1_PA_chymotrypsin"/>
</dbReference>
<dbReference type="InterPro" id="IPR001314">
    <property type="entry name" value="Peptidase_S1A"/>
</dbReference>
<dbReference type="InterPro" id="IPR035914">
    <property type="entry name" value="Sperma_CUB_dom_sf"/>
</dbReference>
<dbReference type="InterPro" id="IPR035976">
    <property type="entry name" value="Sushi/SCR/CCP_sf"/>
</dbReference>
<dbReference type="InterPro" id="IPR000436">
    <property type="entry name" value="Sushi_SCR_CCP_dom"/>
</dbReference>
<dbReference type="InterPro" id="IPR001254">
    <property type="entry name" value="Trypsin_dom"/>
</dbReference>
<dbReference type="InterPro" id="IPR033116">
    <property type="entry name" value="TRYPSIN_SER"/>
</dbReference>
<dbReference type="PANTHER" id="PTHR24255">
    <property type="entry name" value="COMPLEMENT COMPONENT 1, S SUBCOMPONENT-RELATED"/>
    <property type="match status" value="1"/>
</dbReference>
<dbReference type="PANTHER" id="PTHR24255:SF10">
    <property type="entry name" value="MANNAN-BINDING LECTIN SERINE PROTEASE 2"/>
    <property type="match status" value="1"/>
</dbReference>
<dbReference type="Pfam" id="PF00431">
    <property type="entry name" value="CUB"/>
    <property type="match status" value="2"/>
</dbReference>
<dbReference type="Pfam" id="PF07645">
    <property type="entry name" value="EGF_CA"/>
    <property type="match status" value="1"/>
</dbReference>
<dbReference type="Pfam" id="PF00084">
    <property type="entry name" value="Sushi"/>
    <property type="match status" value="2"/>
</dbReference>
<dbReference type="Pfam" id="PF00089">
    <property type="entry name" value="Trypsin"/>
    <property type="match status" value="1"/>
</dbReference>
<dbReference type="PIRSF" id="PIRSF001155">
    <property type="entry name" value="C1r_C1s_MASP"/>
    <property type="match status" value="1"/>
</dbReference>
<dbReference type="PRINTS" id="PR00722">
    <property type="entry name" value="CHYMOTRYPSIN"/>
</dbReference>
<dbReference type="SMART" id="SM00032">
    <property type="entry name" value="CCP"/>
    <property type="match status" value="2"/>
</dbReference>
<dbReference type="SMART" id="SM00042">
    <property type="entry name" value="CUB"/>
    <property type="match status" value="2"/>
</dbReference>
<dbReference type="SMART" id="SM00181">
    <property type="entry name" value="EGF"/>
    <property type="match status" value="1"/>
</dbReference>
<dbReference type="SMART" id="SM00179">
    <property type="entry name" value="EGF_CA"/>
    <property type="match status" value="1"/>
</dbReference>
<dbReference type="SMART" id="SM00020">
    <property type="entry name" value="Tryp_SPc"/>
    <property type="match status" value="1"/>
</dbReference>
<dbReference type="SUPFAM" id="SSF57535">
    <property type="entry name" value="Complement control module/SCR domain"/>
    <property type="match status" value="2"/>
</dbReference>
<dbReference type="SUPFAM" id="SSF57196">
    <property type="entry name" value="EGF/Laminin"/>
    <property type="match status" value="1"/>
</dbReference>
<dbReference type="SUPFAM" id="SSF49854">
    <property type="entry name" value="Spermadhesin, CUB domain"/>
    <property type="match status" value="2"/>
</dbReference>
<dbReference type="SUPFAM" id="SSF50494">
    <property type="entry name" value="Trypsin-like serine proteases"/>
    <property type="match status" value="1"/>
</dbReference>
<dbReference type="PROSITE" id="PS00010">
    <property type="entry name" value="ASX_HYDROXYL"/>
    <property type="match status" value="1"/>
</dbReference>
<dbReference type="PROSITE" id="PS01180">
    <property type="entry name" value="CUB"/>
    <property type="match status" value="2"/>
</dbReference>
<dbReference type="PROSITE" id="PS01186">
    <property type="entry name" value="EGF_2"/>
    <property type="match status" value="1"/>
</dbReference>
<dbReference type="PROSITE" id="PS01187">
    <property type="entry name" value="EGF_CA"/>
    <property type="match status" value="1"/>
</dbReference>
<dbReference type="PROSITE" id="PS50923">
    <property type="entry name" value="SUSHI"/>
    <property type="match status" value="2"/>
</dbReference>
<dbReference type="PROSITE" id="PS50240">
    <property type="entry name" value="TRYPSIN_DOM"/>
    <property type="match status" value="1"/>
</dbReference>
<dbReference type="PROSITE" id="PS00135">
    <property type="entry name" value="TRYPSIN_SER"/>
    <property type="match status" value="1"/>
</dbReference>
<gene>
    <name type="primary">Masp2</name>
</gene>
<reference key="1">
    <citation type="journal article" date="1999" name="J. Immunol.">
        <title>The rat and mouse homologues of MASP-2 and MAp19, components of the mannan-binding lectin activation pathway of complement.</title>
        <authorList>
            <person name="Stover C.M."/>
            <person name="Thiel S."/>
            <person name="Lynch N.J."/>
            <person name="Schwaeble W.J."/>
        </authorList>
    </citation>
    <scope>NUCLEOTIDE SEQUENCE [MRNA] (ISOFORMS 1 AND 2)</scope>
    <scope>SUBUNIT STRUCTURE</scope>
    <scope>ACTIVATION BY PROTEOLYTIC CLEAVAGE</scope>
    <scope>TISSUE SPECIFICITY</scope>
    <source>
        <strain>Fischer 344</strain>
    </source>
</reference>
<reference key="2">
    <citation type="journal article" date="2004" name="Mamm. Genome">
        <title>Organization of the MASP2 locus and its expression profile in mouse and rat.</title>
        <authorList>
            <person name="Stover C.M."/>
            <person name="Lynch N.J."/>
            <person name="Hanson S.J."/>
            <person name="Windbichler M."/>
            <person name="Gregory S.G."/>
            <person name="Schwaeble W.J."/>
        </authorList>
    </citation>
    <scope>NUCLEOTIDE SEQUENCE [GENOMIC DNA]</scope>
</reference>
<reference key="3">
    <citation type="journal article" date="2000" name="J. Biol. Chem.">
        <title>Interaction of mannose-binding protein with associated serine proteases: effects of naturally occurring mutations.</title>
        <authorList>
            <person name="Wallis R."/>
            <person name="Dodd R.B."/>
        </authorList>
    </citation>
    <scope>NUCLEOTIDE SEQUENCE [MRNA] OF 8-685 (ISOFORM 1)</scope>
    <scope>PROTEIN SEQUENCE OF N-TERMINUS</scope>
    <scope>SUBUNIT STRUCTURE</scope>
    <scope>GLYCOSYLATION</scope>
    <scope>IDENTIFICATION BY MASS SPECTROMETRY</scope>
    <scope>INTERACTION WITH MBL2</scope>
    <source>
        <tissue>Liver</tissue>
    </source>
</reference>
<reference key="4">
    <citation type="journal article" date="1999" name="J. Immunol.">
        <title>Two constituents of the initiation complex of the mannan-binding lectin activation pathway of complement are encoded by a single structural gene.</title>
        <authorList>
            <person name="Stover C.M."/>
            <person name="Thiel S."/>
            <person name="Thelen M."/>
            <person name="Lynch N.J."/>
            <person name="Vorup-Jensen T."/>
            <person name="Jensenius J.C."/>
            <person name="Schwaeble W.J."/>
        </authorList>
    </citation>
    <scope>NUCLEOTIDE SEQUENCE [MRNA] OF 87-294 (ISOFORM 1)</scope>
    <source>
        <tissue>Liver</tissue>
    </source>
</reference>
<reference key="5">
    <citation type="journal article" date="2003" name="EMBO J.">
        <title>Crystal structure of the CUB1-EGF-CUB2 region of mannose-binding protein associated serine protease-2.</title>
        <authorList>
            <person name="Feinberg H."/>
            <person name="Uitdehaag J.C.M."/>
            <person name="Davies J.M."/>
            <person name="Wallis R."/>
            <person name="Drickamer K."/>
            <person name="Weis W.I."/>
        </authorList>
    </citation>
    <scope>X-RAY CRYSTALLOGRAPHY (2.7 ANGSTROMS) OF 20-299</scope>
    <scope>HYDROXYLATION AT ASN-158</scope>
    <scope>DISULFIDE BONDS</scope>
    <scope>GLYCOSYLATION AT ASN-103</scope>
</reference>
<sequence length="685" mass="75667">MRLLIVLGLLWSLVATLLGSKWPEPVFGRLVSLGFPEKYGNHQDRSWTLTAPPGFRLRLYFTHFNLELSYRCEYDFVKLTSGTKVLATLCGQESTDTERAPGNDTFYSLGPSLKVTFHSDYSNEKPFTGFEAFYAAEDVDECRTSLGDSVPCDHYCHNYLGGYYCSCRVGYILHQNKHTCSALCSGQVFTGRSGFLSSPEYPQPYPKLSSCAYNIRLEEGFSITLDFVESFDVEMHPEAQCPYDSLKIQTDKREYGPFCGKTLPPRIETDSNKVTITFTTDESGNHTGWKIHYTSTAQPCPDPTAPPNGHISPVQATYVLKDSFSVFCKTGFELLQGSVPLKSFTAVCQKDGSWDRPIPECSIIDCGPPDDLPNGHVDYITGPEVTTYKAVIQYSCEETFYTMSSNGKYVCEADGFWTSSKGEKSLPVCKPVCGLSTHTSGGRIIGGQPAKPGDFPWQVLLLGETTAAGALIHDDWVLTAAHAVYGKTEAMSSLDIRMGILKRLSLIYTQAWPEAVFIHEGYTHGAGFDNDIALIKLKNKVTINRNIMPICLPRKEAASLMKTDFVGTVAGWGLTQKGFLARNLMFVDIPIVDHQKCATAYTKQPYPGAKVTVNMLCAGLDRGGKDSCRGDSGGALVFLDNETQRWFVGGIVSWGSINCGGSEQYGVYTKVTNYIPWIENIINNF</sequence>
<protein>
    <recommendedName>
        <fullName>Mannan-binding lectin serine protease 2</fullName>
        <ecNumber>3.4.21.104</ecNumber>
    </recommendedName>
    <alternativeName>
        <fullName>MBL-associated serine protease 2</fullName>
    </alternativeName>
    <alternativeName>
        <fullName>Mannose-binding protein-associated serine protease 2</fullName>
        <shortName>MASP-2</shortName>
    </alternativeName>
    <component>
        <recommendedName>
            <fullName>Mannan-binding lectin serine protease 2 A chain</fullName>
        </recommendedName>
    </component>
    <component>
        <recommendedName>
            <fullName>Mannan-binding lectin serine protease 2 B chain</fullName>
        </recommendedName>
    </component>
</protein>
<comment type="function">
    <text>Serum protease that plays an important role in the activation of the complement system via mannose-binding lectin. After activation by auto-catalytic cleavage it cleaves C2 and C4, leading to their activation and to the formation of C3 convertase.</text>
</comment>
<comment type="catalytic activity">
    <reaction>
        <text>Selective cleavage after Arg-223 in complement component C2 (-Ser-Leu-Gly-Arg-|-Lys-Ile-Gln-Ile) and after Arg-76 in complement component C4 (-Gly-Leu-Gln-Arg-|-Ala-Leu-Glu-Ile).</text>
        <dbReference type="EC" id="3.4.21.104"/>
    </reaction>
</comment>
<comment type="subunit">
    <text evidence="1">Homodimer; disulfide-linked. Binds MBL2. Isoform 2 binds to MASP1. Binds SERPING1 (By similarity).</text>
</comment>
<comment type="subcellular location">
    <subcellularLocation>
        <location>Secreted</location>
    </subcellularLocation>
</comment>
<comment type="alternative products">
    <event type="alternative splicing"/>
    <isoform>
        <id>Q9JJS8-1</id>
        <name>1</name>
        <sequence type="displayed"/>
    </isoform>
    <isoform>
        <id>Q9JJS8-2</id>
        <name>2</name>
        <name>MAp19</name>
        <sequence type="described" ref="VSP_014638 VSP_014639"/>
    </isoform>
</comment>
<comment type="tissue specificity">
    <text evidence="6">Highly expressed in liver. Secreted in plasma.</text>
</comment>
<comment type="PTM">
    <text evidence="7 8">N-glycosylated.</text>
</comment>
<comment type="PTM">
    <text evidence="1">The iron and 2-oxoglutarate dependent 3-hydroxylation of aspartate and asparagine is (R) stereospecific within EGF domains.</text>
</comment>
<comment type="miscellaneous">
    <text>Dimerization and MBL2 binding requires calcium ions.</text>
</comment>
<comment type="similarity">
    <text evidence="4">Belongs to the peptidase S1 family.</text>
</comment>
<keyword id="KW-0002">3D-structure</keyword>
<keyword id="KW-0025">Alternative splicing</keyword>
<keyword id="KW-0068">Autocatalytic cleavage</keyword>
<keyword id="KW-0106">Calcium</keyword>
<keyword id="KW-0180">Complement pathway</keyword>
<keyword id="KW-0903">Direct protein sequencing</keyword>
<keyword id="KW-1015">Disulfide bond</keyword>
<keyword id="KW-0245">EGF-like domain</keyword>
<keyword id="KW-0325">Glycoprotein</keyword>
<keyword id="KW-0378">Hydrolase</keyword>
<keyword id="KW-0379">Hydroxylation</keyword>
<keyword id="KW-0391">Immunity</keyword>
<keyword id="KW-0399">Innate immunity</keyword>
<keyword id="KW-0479">Metal-binding</keyword>
<keyword id="KW-0645">Protease</keyword>
<keyword id="KW-1185">Reference proteome</keyword>
<keyword id="KW-0677">Repeat</keyword>
<keyword id="KW-0964">Secreted</keyword>
<keyword id="KW-0720">Serine protease</keyword>
<keyword id="KW-0732">Signal</keyword>
<keyword id="KW-0768">Sushi</keyword>
<feature type="signal peptide" evidence="7">
    <location>
        <begin position="1"/>
        <end position="19"/>
    </location>
</feature>
<feature type="chain" id="PRO_0000027604" description="Mannan-binding lectin serine protease 2">
    <location>
        <begin position="20"/>
        <end position="685"/>
    </location>
</feature>
<feature type="chain" id="PRO_0000027605" description="Mannan-binding lectin serine protease 2 A chain">
    <location>
        <begin position="20"/>
        <end position="443"/>
    </location>
</feature>
<feature type="chain" id="PRO_0000027606" description="Mannan-binding lectin serine protease 2 B chain">
    <location>
        <begin position="444"/>
        <end position="685"/>
    </location>
</feature>
<feature type="domain" description="CUB 1" evidence="3">
    <location>
        <begin position="20"/>
        <end position="137"/>
    </location>
</feature>
<feature type="domain" description="EGF-like; calcium-binding">
    <location>
        <begin position="138"/>
        <end position="181"/>
    </location>
</feature>
<feature type="domain" description="CUB 2" evidence="3">
    <location>
        <begin position="184"/>
        <end position="296"/>
    </location>
</feature>
<feature type="domain" description="Sushi 1" evidence="5">
    <location>
        <begin position="298"/>
        <end position="363"/>
    </location>
</feature>
<feature type="domain" description="Sushi 2" evidence="5">
    <location>
        <begin position="364"/>
        <end position="431"/>
    </location>
</feature>
<feature type="domain" description="Peptidase S1" evidence="4">
    <location>
        <begin position="444"/>
        <end position="683"/>
    </location>
</feature>
<feature type="active site" description="Charge relay system" evidence="1">
    <location>
        <position position="482"/>
    </location>
</feature>
<feature type="active site" description="Charge relay system" evidence="1">
    <location>
        <position position="531"/>
    </location>
</feature>
<feature type="active site" description="Charge relay system" evidence="1">
    <location>
        <position position="632"/>
    </location>
</feature>
<feature type="binding site" evidence="1">
    <location>
        <position position="67"/>
    </location>
    <ligand>
        <name>Ca(2+)</name>
        <dbReference type="ChEBI" id="CHEBI:29108"/>
        <label>1</label>
    </ligand>
</feature>
<feature type="binding site" evidence="1">
    <location>
        <position position="75"/>
    </location>
    <ligand>
        <name>Ca(2+)</name>
        <dbReference type="ChEBI" id="CHEBI:29108"/>
        <label>1</label>
    </ligand>
</feature>
<feature type="binding site" evidence="1">
    <location>
        <position position="120"/>
    </location>
    <ligand>
        <name>Ca(2+)</name>
        <dbReference type="ChEBI" id="CHEBI:29108"/>
        <label>1</label>
    </ligand>
</feature>
<feature type="binding site" evidence="1">
    <location>
        <position position="122"/>
    </location>
    <ligand>
        <name>Ca(2+)</name>
        <dbReference type="ChEBI" id="CHEBI:29108"/>
        <label>1</label>
    </ligand>
</feature>
<feature type="binding site" evidence="1">
    <location>
        <position position="123"/>
    </location>
    <ligand>
        <name>Ca(2+)</name>
        <dbReference type="ChEBI" id="CHEBI:29108"/>
        <label>1</label>
    </ligand>
</feature>
<feature type="binding site">
    <location>
        <position position="138"/>
    </location>
    <ligand>
        <name>Ca(2+)</name>
        <dbReference type="ChEBI" id="CHEBI:29108"/>
        <label>2</label>
    </ligand>
</feature>
<feature type="binding site">
    <location>
        <position position="139"/>
    </location>
    <ligand>
        <name>Ca(2+)</name>
        <dbReference type="ChEBI" id="CHEBI:29108"/>
        <label>2</label>
    </ligand>
</feature>
<feature type="binding site">
    <location>
        <position position="159"/>
    </location>
    <ligand>
        <name>Ca(2+)</name>
        <dbReference type="ChEBI" id="CHEBI:29108"/>
        <label>2</label>
    </ligand>
</feature>
<feature type="binding site" evidence="1">
    <location>
        <position position="162"/>
    </location>
    <ligand>
        <name>Ca(2+)</name>
        <dbReference type="ChEBI" id="CHEBI:29108"/>
        <label>2</label>
    </ligand>
</feature>
<feature type="site" description="Cleavage" evidence="1">
    <location>
        <begin position="443"/>
        <end position="444"/>
    </location>
</feature>
<feature type="modified residue" description="(3R)-3-hydroxyasparagine" evidence="8">
    <location>
        <position position="158"/>
    </location>
</feature>
<feature type="glycosylation site" description="N-linked (GlcNAc...) asparagine" evidence="8">
    <location>
        <position position="103"/>
    </location>
</feature>
<feature type="glycosylation site" description="N-linked (GlcNAc...) asparagine" evidence="2">
    <location>
        <position position="285"/>
    </location>
</feature>
<feature type="glycosylation site" description="N-linked (GlcNAc...) asparagine" evidence="2">
    <location>
        <position position="641"/>
    </location>
</feature>
<feature type="disulfide bond" evidence="8">
    <location>
        <begin position="72"/>
        <end position="90"/>
    </location>
</feature>
<feature type="disulfide bond" evidence="8">
    <location>
        <begin position="152"/>
        <end position="165"/>
    </location>
</feature>
<feature type="disulfide bond" evidence="8">
    <location>
        <begin position="167"/>
        <end position="180"/>
    </location>
</feature>
<feature type="disulfide bond" evidence="8">
    <location>
        <begin position="184"/>
        <end position="211"/>
    </location>
</feature>
<feature type="disulfide bond" evidence="8">
    <location>
        <begin position="241"/>
        <end position="259"/>
    </location>
</feature>
<feature type="disulfide bond" evidence="1">
    <location>
        <begin position="300"/>
        <end position="348"/>
    </location>
</feature>
<feature type="disulfide bond" evidence="1">
    <location>
        <begin position="328"/>
        <end position="361"/>
    </location>
</feature>
<feature type="disulfide bond" evidence="1">
    <location>
        <begin position="366"/>
        <end position="411"/>
    </location>
</feature>
<feature type="disulfide bond" evidence="1">
    <location>
        <begin position="396"/>
        <end position="429"/>
    </location>
</feature>
<feature type="disulfide bond" description="Interchain (between A and B chains)" evidence="3 4 5">
    <location>
        <begin position="433"/>
        <end position="551"/>
    </location>
</feature>
<feature type="disulfide bond" evidence="1">
    <location>
        <begin position="597"/>
        <end position="617"/>
    </location>
</feature>
<feature type="disulfide bond" evidence="1">
    <location>
        <begin position="628"/>
        <end position="659"/>
    </location>
</feature>
<feature type="splice variant" id="VSP_014638" description="In isoform 2." evidence="9">
    <original>ALCS</original>
    <variation>EQSL</variation>
    <location>
        <begin position="182"/>
        <end position="185"/>
    </location>
</feature>
<feature type="splice variant" id="VSP_014639" description="In isoform 2." evidence="9">
    <location>
        <begin position="186"/>
        <end position="685"/>
    </location>
</feature>
<feature type="sequence conflict" description="In Ref. 1; CAB90832." evidence="10" ref="1">
    <original>L</original>
    <variation>P</variation>
    <location>
        <position position="33"/>
    </location>
</feature>
<feature type="sequence conflict" description="In Ref. 1; CAB65385/CAB65387/CAB65390." evidence="10" ref="1">
    <original>G</original>
    <variation>A</variation>
    <location>
        <position position="34"/>
    </location>
</feature>
<feature type="sequence conflict" description="In Ref. 1; CAB90832." evidence="10" ref="1">
    <original>LI</original>
    <variation>PH</variation>
    <location>
        <begin position="506"/>
        <end position="507"/>
    </location>
</feature>
<feature type="sequence conflict" description="In Ref. 1; CAB90832." evidence="10" ref="1">
    <original>R</original>
    <variation>A</variation>
    <location>
        <position position="622"/>
    </location>
</feature>
<feature type="strand" evidence="12">
    <location>
        <begin position="27"/>
        <end position="31"/>
    </location>
</feature>
<feature type="turn" evidence="12">
    <location>
        <begin position="33"/>
        <end position="36"/>
    </location>
</feature>
<feature type="strand" evidence="12">
    <location>
        <begin position="44"/>
        <end position="50"/>
    </location>
</feature>
<feature type="strand" evidence="12">
    <location>
        <begin position="55"/>
        <end position="65"/>
    </location>
</feature>
<feature type="helix" evidence="12">
    <location>
        <begin position="70"/>
        <end position="72"/>
    </location>
</feature>
<feature type="strand" evidence="12">
    <location>
        <begin position="74"/>
        <end position="81"/>
    </location>
</feature>
<feature type="strand" evidence="12">
    <location>
        <begin position="84"/>
        <end position="89"/>
    </location>
</feature>
<feature type="strand" evidence="12">
    <location>
        <begin position="91"/>
        <end position="93"/>
    </location>
</feature>
<feature type="strand" evidence="11">
    <location>
        <begin position="105"/>
        <end position="107"/>
    </location>
</feature>
<feature type="strand" evidence="12">
    <location>
        <begin position="109"/>
        <end position="118"/>
    </location>
</feature>
<feature type="strand" evidence="12">
    <location>
        <begin position="129"/>
        <end position="138"/>
    </location>
</feature>
<feature type="turn" evidence="12">
    <location>
        <begin position="141"/>
        <end position="143"/>
    </location>
</feature>
<feature type="strand" evidence="13">
    <location>
        <begin position="146"/>
        <end position="148"/>
    </location>
</feature>
<feature type="strand" evidence="12">
    <location>
        <begin position="151"/>
        <end position="159"/>
    </location>
</feature>
<feature type="strand" evidence="12">
    <location>
        <begin position="162"/>
        <end position="166"/>
    </location>
</feature>
<feature type="strand" evidence="12">
    <location>
        <begin position="171"/>
        <end position="173"/>
    </location>
</feature>
<feature type="strand" evidence="12">
    <location>
        <begin position="177"/>
        <end position="182"/>
    </location>
</feature>
<feature type="strand" evidence="12">
    <location>
        <begin position="185"/>
        <end position="189"/>
    </location>
</feature>
<feature type="strand" evidence="12">
    <location>
        <begin position="191"/>
        <end position="197"/>
    </location>
</feature>
<feature type="turn" evidence="12">
    <location>
        <begin position="199"/>
        <end position="202"/>
    </location>
</feature>
<feature type="strand" evidence="12">
    <location>
        <begin position="210"/>
        <end position="216"/>
    </location>
</feature>
<feature type="strand" evidence="12">
    <location>
        <begin position="221"/>
        <end position="227"/>
    </location>
</feature>
<feature type="strand" evidence="14">
    <location>
        <begin position="237"/>
        <end position="239"/>
    </location>
</feature>
<feature type="strand" evidence="12">
    <location>
        <begin position="241"/>
        <end position="249"/>
    </location>
</feature>
<feature type="strand" evidence="14">
    <location>
        <begin position="253"/>
        <end position="255"/>
    </location>
</feature>
<feature type="strand" evidence="12">
    <location>
        <begin position="260"/>
        <end position="262"/>
    </location>
</feature>
<feature type="strand" evidence="12">
    <location>
        <begin position="272"/>
        <end position="279"/>
    </location>
</feature>
<feature type="strand" evidence="12">
    <location>
        <begin position="290"/>
        <end position="297"/>
    </location>
</feature>
<evidence type="ECO:0000250" key="1"/>
<evidence type="ECO:0000255" key="2"/>
<evidence type="ECO:0000255" key="3">
    <source>
        <dbReference type="PROSITE-ProRule" id="PRU00059"/>
    </source>
</evidence>
<evidence type="ECO:0000255" key="4">
    <source>
        <dbReference type="PROSITE-ProRule" id="PRU00274"/>
    </source>
</evidence>
<evidence type="ECO:0000255" key="5">
    <source>
        <dbReference type="PROSITE-ProRule" id="PRU00302"/>
    </source>
</evidence>
<evidence type="ECO:0000269" key="6">
    <source>
    </source>
</evidence>
<evidence type="ECO:0000269" key="7">
    <source>
    </source>
</evidence>
<evidence type="ECO:0000269" key="8">
    <source>
    </source>
</evidence>
<evidence type="ECO:0000303" key="9">
    <source>
    </source>
</evidence>
<evidence type="ECO:0000305" key="10"/>
<evidence type="ECO:0007829" key="11">
    <source>
        <dbReference type="PDB" id="1NT0"/>
    </source>
</evidence>
<evidence type="ECO:0007829" key="12">
    <source>
        <dbReference type="PDB" id="5CIS"/>
    </source>
</evidence>
<evidence type="ECO:0007829" key="13">
    <source>
        <dbReference type="PDB" id="5CKM"/>
    </source>
</evidence>
<evidence type="ECO:0007829" key="14">
    <source>
        <dbReference type="PDB" id="5CKN"/>
    </source>
</evidence>
<accession>Q9JJS8</accession>
<accession>Q9JJP3</accession>
<accession>Q9QX83</accession>
<accession>Q9QX84</accession>
<accession>Q9QX85</accession>
<accession>Q9QX86</accession>
<accession>Q9QX87</accession>
<accession>Q9QX88</accession>
<accession>Q9QX89</accession>
<accession>Q9QX90</accession>
<accession>Q9QX91</accession>
<accession>Q9QXD4</accession>
<accession>Q9WUZ0</accession>